<sequence>MLKNLFRKTKYITVSQKNIENYKRENTPTIPDGMWVKCNKCGEILYQNDLEKNYMVCNLCGNHFRIGVKERIKYLFDKDTFKEWDYKIKTENPLDFKGYDEKIEHIKEKTNLSEAVTTGKCKIAGMEVVVCIMDSKFMMGSMGSVVGEKITRAIERAIGLRLPVIIFTASGGARMQEGILSLMQMAKVSSALAKLDEEGLLYICVLTDPTTGGVTASFAMLGDIILAEPDALIGFAGKRVIEQTINEKLPEDFQKSEFLLEHGFIDKIVPRSDLRKVLAKLINMHQNSF</sequence>
<reference key="1">
    <citation type="journal article" date="2007" name="PLoS ONE">
        <title>Analysis of the neurotoxin complex genes in Clostridium botulinum A1-A4 and B1 strains: BoNT/A3, /Ba4 and /B1 clusters are located within plasmids.</title>
        <authorList>
            <person name="Smith T.J."/>
            <person name="Hill K.K."/>
            <person name="Foley B.T."/>
            <person name="Detter J.C."/>
            <person name="Munk A.C."/>
            <person name="Bruce D.C."/>
            <person name="Doggett N.A."/>
            <person name="Smith L.A."/>
            <person name="Marks J.D."/>
            <person name="Xie G."/>
            <person name="Brettin T.S."/>
        </authorList>
    </citation>
    <scope>NUCLEOTIDE SEQUENCE [LARGE SCALE GENOMIC DNA]</scope>
    <source>
        <strain>ATCC 19397 / Type A</strain>
    </source>
</reference>
<name>ACCD_CLOB1</name>
<proteinExistence type="inferred from homology"/>
<dbReference type="EC" id="2.1.3.15" evidence="1"/>
<dbReference type="EMBL" id="CP000726">
    <property type="protein sequence ID" value="ABS32561.1"/>
    <property type="molecule type" value="Genomic_DNA"/>
</dbReference>
<dbReference type="RefSeq" id="WP_012048422.1">
    <property type="nucleotide sequence ID" value="NC_009697.1"/>
</dbReference>
<dbReference type="SMR" id="A7FPN5"/>
<dbReference type="GeneID" id="5186231"/>
<dbReference type="KEGG" id="cba:CLB_3675"/>
<dbReference type="HOGENOM" id="CLU_015486_1_1_9"/>
<dbReference type="UniPathway" id="UPA00655">
    <property type="reaction ID" value="UER00711"/>
</dbReference>
<dbReference type="GO" id="GO:0009317">
    <property type="term" value="C:acetyl-CoA carboxylase complex"/>
    <property type="evidence" value="ECO:0007669"/>
    <property type="project" value="InterPro"/>
</dbReference>
<dbReference type="GO" id="GO:0003989">
    <property type="term" value="F:acetyl-CoA carboxylase activity"/>
    <property type="evidence" value="ECO:0007669"/>
    <property type="project" value="InterPro"/>
</dbReference>
<dbReference type="GO" id="GO:0005524">
    <property type="term" value="F:ATP binding"/>
    <property type="evidence" value="ECO:0007669"/>
    <property type="project" value="UniProtKB-KW"/>
</dbReference>
<dbReference type="GO" id="GO:0016743">
    <property type="term" value="F:carboxyl- or carbamoyltransferase activity"/>
    <property type="evidence" value="ECO:0007669"/>
    <property type="project" value="UniProtKB-UniRule"/>
</dbReference>
<dbReference type="GO" id="GO:0008270">
    <property type="term" value="F:zinc ion binding"/>
    <property type="evidence" value="ECO:0007669"/>
    <property type="project" value="UniProtKB-UniRule"/>
</dbReference>
<dbReference type="GO" id="GO:0006633">
    <property type="term" value="P:fatty acid biosynthetic process"/>
    <property type="evidence" value="ECO:0007669"/>
    <property type="project" value="UniProtKB-KW"/>
</dbReference>
<dbReference type="GO" id="GO:2001295">
    <property type="term" value="P:malonyl-CoA biosynthetic process"/>
    <property type="evidence" value="ECO:0007669"/>
    <property type="project" value="UniProtKB-UniRule"/>
</dbReference>
<dbReference type="Gene3D" id="3.90.226.10">
    <property type="entry name" value="2-enoyl-CoA Hydratase, Chain A, domain 1"/>
    <property type="match status" value="1"/>
</dbReference>
<dbReference type="HAMAP" id="MF_01395">
    <property type="entry name" value="AcetylCoA_CT_beta"/>
    <property type="match status" value="1"/>
</dbReference>
<dbReference type="InterPro" id="IPR034733">
    <property type="entry name" value="AcCoA_carboxyl_beta"/>
</dbReference>
<dbReference type="InterPro" id="IPR000438">
    <property type="entry name" value="Acetyl_CoA_COase_Trfase_b_su"/>
</dbReference>
<dbReference type="InterPro" id="IPR029045">
    <property type="entry name" value="ClpP/crotonase-like_dom_sf"/>
</dbReference>
<dbReference type="InterPro" id="IPR011762">
    <property type="entry name" value="COA_CT_N"/>
</dbReference>
<dbReference type="InterPro" id="IPR041010">
    <property type="entry name" value="Znf-ACC"/>
</dbReference>
<dbReference type="NCBIfam" id="TIGR00515">
    <property type="entry name" value="accD"/>
    <property type="match status" value="1"/>
</dbReference>
<dbReference type="PANTHER" id="PTHR42995">
    <property type="entry name" value="ACETYL-COENZYME A CARBOXYLASE CARBOXYL TRANSFERASE SUBUNIT BETA, CHLOROPLASTIC"/>
    <property type="match status" value="1"/>
</dbReference>
<dbReference type="PANTHER" id="PTHR42995:SF5">
    <property type="entry name" value="ACETYL-COENZYME A CARBOXYLASE CARBOXYL TRANSFERASE SUBUNIT BETA, CHLOROPLASTIC"/>
    <property type="match status" value="1"/>
</dbReference>
<dbReference type="Pfam" id="PF01039">
    <property type="entry name" value="Carboxyl_trans"/>
    <property type="match status" value="1"/>
</dbReference>
<dbReference type="Pfam" id="PF17848">
    <property type="entry name" value="Zn_ribbon_ACC"/>
    <property type="match status" value="1"/>
</dbReference>
<dbReference type="PRINTS" id="PR01070">
    <property type="entry name" value="ACCCTRFRASEB"/>
</dbReference>
<dbReference type="SUPFAM" id="SSF52096">
    <property type="entry name" value="ClpP/crotonase"/>
    <property type="match status" value="1"/>
</dbReference>
<dbReference type="PROSITE" id="PS50980">
    <property type="entry name" value="COA_CT_NTER"/>
    <property type="match status" value="1"/>
</dbReference>
<accession>A7FPN5</accession>
<evidence type="ECO:0000255" key="1">
    <source>
        <dbReference type="HAMAP-Rule" id="MF_01395"/>
    </source>
</evidence>
<evidence type="ECO:0000255" key="2">
    <source>
        <dbReference type="PROSITE-ProRule" id="PRU01136"/>
    </source>
</evidence>
<organism>
    <name type="scientific">Clostridium botulinum (strain ATCC 19397 / Type A)</name>
    <dbReference type="NCBI Taxonomy" id="441770"/>
    <lineage>
        <taxon>Bacteria</taxon>
        <taxon>Bacillati</taxon>
        <taxon>Bacillota</taxon>
        <taxon>Clostridia</taxon>
        <taxon>Eubacteriales</taxon>
        <taxon>Clostridiaceae</taxon>
        <taxon>Clostridium</taxon>
    </lineage>
</organism>
<protein>
    <recommendedName>
        <fullName evidence="1">Acetyl-coenzyme A carboxylase carboxyl transferase subunit beta</fullName>
        <shortName evidence="1">ACCase subunit beta</shortName>
        <shortName evidence="1">Acetyl-CoA carboxylase carboxyltransferase subunit beta</shortName>
        <ecNumber evidence="1">2.1.3.15</ecNumber>
    </recommendedName>
</protein>
<feature type="chain" id="PRO_0000389722" description="Acetyl-coenzyme A carboxylase carboxyl transferase subunit beta">
    <location>
        <begin position="1"/>
        <end position="289"/>
    </location>
</feature>
<feature type="domain" description="CoA carboxyltransferase N-terminal" evidence="2">
    <location>
        <begin position="34"/>
        <end position="289"/>
    </location>
</feature>
<feature type="zinc finger region" description="C4-type" evidence="1">
    <location>
        <begin position="38"/>
        <end position="60"/>
    </location>
</feature>
<feature type="binding site" evidence="1">
    <location>
        <position position="38"/>
    </location>
    <ligand>
        <name>Zn(2+)</name>
        <dbReference type="ChEBI" id="CHEBI:29105"/>
    </ligand>
</feature>
<feature type="binding site" evidence="1">
    <location>
        <position position="41"/>
    </location>
    <ligand>
        <name>Zn(2+)</name>
        <dbReference type="ChEBI" id="CHEBI:29105"/>
    </ligand>
</feature>
<feature type="binding site" evidence="1">
    <location>
        <position position="57"/>
    </location>
    <ligand>
        <name>Zn(2+)</name>
        <dbReference type="ChEBI" id="CHEBI:29105"/>
    </ligand>
</feature>
<feature type="binding site" evidence="1">
    <location>
        <position position="60"/>
    </location>
    <ligand>
        <name>Zn(2+)</name>
        <dbReference type="ChEBI" id="CHEBI:29105"/>
    </ligand>
</feature>
<comment type="function">
    <text evidence="1">Component of the acetyl coenzyme A carboxylase (ACC) complex. Biotin carboxylase (BC) catalyzes the carboxylation of biotin on its carrier protein (BCCP) and then the CO(2) group is transferred by the transcarboxylase to acetyl-CoA to form malonyl-CoA.</text>
</comment>
<comment type="catalytic activity">
    <reaction evidence="1">
        <text>N(6)-carboxybiotinyl-L-lysyl-[protein] + acetyl-CoA = N(6)-biotinyl-L-lysyl-[protein] + malonyl-CoA</text>
        <dbReference type="Rhea" id="RHEA:54728"/>
        <dbReference type="Rhea" id="RHEA-COMP:10505"/>
        <dbReference type="Rhea" id="RHEA-COMP:10506"/>
        <dbReference type="ChEBI" id="CHEBI:57288"/>
        <dbReference type="ChEBI" id="CHEBI:57384"/>
        <dbReference type="ChEBI" id="CHEBI:83144"/>
        <dbReference type="ChEBI" id="CHEBI:83145"/>
        <dbReference type="EC" id="2.1.3.15"/>
    </reaction>
</comment>
<comment type="cofactor">
    <cofactor evidence="1">
        <name>Zn(2+)</name>
        <dbReference type="ChEBI" id="CHEBI:29105"/>
    </cofactor>
    <text evidence="1">Binds 1 zinc ion per subunit.</text>
</comment>
<comment type="pathway">
    <text evidence="1">Lipid metabolism; malonyl-CoA biosynthesis; malonyl-CoA from acetyl-CoA: step 1/1.</text>
</comment>
<comment type="subunit">
    <text evidence="1">Acetyl-CoA carboxylase is a heterohexamer composed of biotin carboxyl carrier protein (AccB), biotin carboxylase (AccC) and two subunits each of ACCase subunit alpha (AccA) and ACCase subunit beta (AccD).</text>
</comment>
<comment type="subcellular location">
    <subcellularLocation>
        <location evidence="1">Cytoplasm</location>
    </subcellularLocation>
</comment>
<comment type="similarity">
    <text evidence="1">Belongs to the AccD/PCCB family.</text>
</comment>
<keyword id="KW-0067">ATP-binding</keyword>
<keyword id="KW-0963">Cytoplasm</keyword>
<keyword id="KW-0275">Fatty acid biosynthesis</keyword>
<keyword id="KW-0276">Fatty acid metabolism</keyword>
<keyword id="KW-0444">Lipid biosynthesis</keyword>
<keyword id="KW-0443">Lipid metabolism</keyword>
<keyword id="KW-0479">Metal-binding</keyword>
<keyword id="KW-0547">Nucleotide-binding</keyword>
<keyword id="KW-0808">Transferase</keyword>
<keyword id="KW-0862">Zinc</keyword>
<keyword id="KW-0863">Zinc-finger</keyword>
<gene>
    <name evidence="1" type="primary">accD</name>
    <name type="ordered locus">CLB_3675</name>
</gene>